<comment type="function">
    <text evidence="1">Component of the eukaryotic translation initiation factor 3 (eIF-3) complex, which is involved in protein synthesis of a specialized repertoire of mRNAs and, together with other initiation factors, stimulates binding of mRNA and methionyl-tRNAi to the 40S ribosome. The eIF-3 complex specifically targets and initiates translation of a subset of mRNAs involved in cell proliferation.</text>
</comment>
<comment type="subunit">
    <text evidence="1">Component of the eukaryotic translation initiation factor 3 (eIF-3) complex.</text>
</comment>
<comment type="subcellular location">
    <subcellularLocation>
        <location evidence="1">Cytoplasm</location>
    </subcellularLocation>
</comment>
<comment type="similarity">
    <text evidence="1">Belongs to the eIF-3 subunit H family.</text>
</comment>
<organism>
    <name type="scientific">Aedes aegypti</name>
    <name type="common">Yellowfever mosquito</name>
    <name type="synonym">Culex aegypti</name>
    <dbReference type="NCBI Taxonomy" id="7159"/>
    <lineage>
        <taxon>Eukaryota</taxon>
        <taxon>Metazoa</taxon>
        <taxon>Ecdysozoa</taxon>
        <taxon>Arthropoda</taxon>
        <taxon>Hexapoda</taxon>
        <taxon>Insecta</taxon>
        <taxon>Pterygota</taxon>
        <taxon>Neoptera</taxon>
        <taxon>Endopterygota</taxon>
        <taxon>Diptera</taxon>
        <taxon>Nematocera</taxon>
        <taxon>Culicoidea</taxon>
        <taxon>Culicidae</taxon>
        <taxon>Culicinae</taxon>
        <taxon>Aedini</taxon>
        <taxon>Aedes</taxon>
        <taxon>Stegomyia</taxon>
    </lineage>
</organism>
<dbReference type="EMBL" id="CH477476">
    <property type="protein sequence ID" value="EAT40312.1"/>
    <property type="molecule type" value="Genomic_DNA"/>
</dbReference>
<dbReference type="EMBL" id="DQ440248">
    <property type="protein sequence ID" value="ABF18281.1"/>
    <property type="molecule type" value="mRNA"/>
</dbReference>
<dbReference type="SMR" id="Q170C2"/>
<dbReference type="FunCoup" id="Q170C2">
    <property type="interactions" value="2196"/>
</dbReference>
<dbReference type="STRING" id="7159.Q170C2"/>
<dbReference type="MEROPS" id="M67.971"/>
<dbReference type="PaxDb" id="7159-AAEL007945-PA"/>
<dbReference type="EnsemblMetazoa" id="AAEL007945-RA">
    <property type="protein sequence ID" value="AAEL007945-PA"/>
    <property type="gene ID" value="AAEL007945"/>
</dbReference>
<dbReference type="GeneID" id="5569863"/>
<dbReference type="KEGG" id="aag:5569863"/>
<dbReference type="CTD" id="8667"/>
<dbReference type="VEuPathDB" id="VectorBase:AAEL007945"/>
<dbReference type="eggNOG" id="KOG1560">
    <property type="taxonomic scope" value="Eukaryota"/>
</dbReference>
<dbReference type="HOGENOM" id="CLU_044094_0_0_1"/>
<dbReference type="InParanoid" id="Q170C2"/>
<dbReference type="OMA" id="WYQSTYF"/>
<dbReference type="OrthoDB" id="10265695at2759"/>
<dbReference type="PhylomeDB" id="Q170C2"/>
<dbReference type="Proteomes" id="UP000008820">
    <property type="component" value="Chromosome 2"/>
</dbReference>
<dbReference type="Proteomes" id="UP000682892">
    <property type="component" value="Unassembled WGS sequence"/>
</dbReference>
<dbReference type="GO" id="GO:0016282">
    <property type="term" value="C:eukaryotic 43S preinitiation complex"/>
    <property type="evidence" value="ECO:0007669"/>
    <property type="project" value="UniProtKB-UniRule"/>
</dbReference>
<dbReference type="GO" id="GO:0033290">
    <property type="term" value="C:eukaryotic 48S preinitiation complex"/>
    <property type="evidence" value="ECO:0007669"/>
    <property type="project" value="UniProtKB-UniRule"/>
</dbReference>
<dbReference type="GO" id="GO:0005852">
    <property type="term" value="C:eukaryotic translation initiation factor 3 complex"/>
    <property type="evidence" value="ECO:0007669"/>
    <property type="project" value="UniProtKB-UniRule"/>
</dbReference>
<dbReference type="GO" id="GO:0008237">
    <property type="term" value="F:metallopeptidase activity"/>
    <property type="evidence" value="ECO:0007669"/>
    <property type="project" value="InterPro"/>
</dbReference>
<dbReference type="GO" id="GO:0003743">
    <property type="term" value="F:translation initiation factor activity"/>
    <property type="evidence" value="ECO:0007669"/>
    <property type="project" value="UniProtKB-UniRule"/>
</dbReference>
<dbReference type="GO" id="GO:0001732">
    <property type="term" value="P:formation of cytoplasmic translation initiation complex"/>
    <property type="evidence" value="ECO:0007669"/>
    <property type="project" value="UniProtKB-UniRule"/>
</dbReference>
<dbReference type="CDD" id="cd08065">
    <property type="entry name" value="MPN_eIF3h"/>
    <property type="match status" value="1"/>
</dbReference>
<dbReference type="FunFam" id="3.40.140.10:FF:000045">
    <property type="entry name" value="Eukaryotic translation initiation factor 3 subunit H"/>
    <property type="match status" value="1"/>
</dbReference>
<dbReference type="Gene3D" id="3.40.140.10">
    <property type="entry name" value="Cytidine Deaminase, domain 2"/>
    <property type="match status" value="1"/>
</dbReference>
<dbReference type="HAMAP" id="MF_03007">
    <property type="entry name" value="eIF3h"/>
    <property type="match status" value="1"/>
</dbReference>
<dbReference type="InterPro" id="IPR027524">
    <property type="entry name" value="eIF3h"/>
</dbReference>
<dbReference type="InterPro" id="IPR045810">
    <property type="entry name" value="eIF3h_C"/>
</dbReference>
<dbReference type="InterPro" id="IPR000555">
    <property type="entry name" value="JAMM/MPN+_dom"/>
</dbReference>
<dbReference type="InterPro" id="IPR050242">
    <property type="entry name" value="JAMM_MPN+_peptidase_M67A"/>
</dbReference>
<dbReference type="InterPro" id="IPR037518">
    <property type="entry name" value="MPN"/>
</dbReference>
<dbReference type="PANTHER" id="PTHR10410">
    <property type="entry name" value="EUKARYOTIC TRANSLATION INITIATION FACTOR 3 -RELATED"/>
    <property type="match status" value="1"/>
</dbReference>
<dbReference type="Pfam" id="PF19445">
    <property type="entry name" value="eIF3h_C"/>
    <property type="match status" value="1"/>
</dbReference>
<dbReference type="Pfam" id="PF01398">
    <property type="entry name" value="JAB"/>
    <property type="match status" value="1"/>
</dbReference>
<dbReference type="SMART" id="SM00232">
    <property type="entry name" value="JAB_MPN"/>
    <property type="match status" value="1"/>
</dbReference>
<dbReference type="PROSITE" id="PS50249">
    <property type="entry name" value="MPN"/>
    <property type="match status" value="1"/>
</dbReference>
<gene>
    <name type="ORF">AAEL007945</name>
</gene>
<name>EIF3H_AEDAE</name>
<accession>Q170C2</accession>
<accession>Q1HR46</accession>
<feature type="chain" id="PRO_0000365181" description="Eukaryotic translation initiation factor 3 subunit H">
    <location>
        <begin position="1"/>
        <end position="336"/>
    </location>
</feature>
<feature type="domain" description="MPN" evidence="2">
    <location>
        <begin position="21"/>
        <end position="154"/>
    </location>
</feature>
<evidence type="ECO:0000255" key="1">
    <source>
        <dbReference type="HAMAP-Rule" id="MF_03007"/>
    </source>
</evidence>
<evidence type="ECO:0000255" key="2">
    <source>
        <dbReference type="PROSITE-ProRule" id="PRU01182"/>
    </source>
</evidence>
<reference key="1">
    <citation type="journal article" date="2007" name="Science">
        <title>Genome sequence of Aedes aegypti, a major arbovirus vector.</title>
        <authorList>
            <person name="Nene V."/>
            <person name="Wortman J.R."/>
            <person name="Lawson D."/>
            <person name="Haas B.J."/>
            <person name="Kodira C.D."/>
            <person name="Tu Z.J."/>
            <person name="Loftus B.J."/>
            <person name="Xi Z."/>
            <person name="Megy K."/>
            <person name="Grabherr M."/>
            <person name="Ren Q."/>
            <person name="Zdobnov E.M."/>
            <person name="Lobo N.F."/>
            <person name="Campbell K.S."/>
            <person name="Brown S.E."/>
            <person name="Bonaldo M.F."/>
            <person name="Zhu J."/>
            <person name="Sinkins S.P."/>
            <person name="Hogenkamp D.G."/>
            <person name="Amedeo P."/>
            <person name="Arensburger P."/>
            <person name="Atkinson P.W."/>
            <person name="Bidwell S.L."/>
            <person name="Biedler J."/>
            <person name="Birney E."/>
            <person name="Bruggner R.V."/>
            <person name="Costas J."/>
            <person name="Coy M.R."/>
            <person name="Crabtree J."/>
            <person name="Crawford M."/>
            <person name="DeBruyn B."/>
            <person name="DeCaprio D."/>
            <person name="Eiglmeier K."/>
            <person name="Eisenstadt E."/>
            <person name="El-Dorry H."/>
            <person name="Gelbart W.M."/>
            <person name="Gomes S.L."/>
            <person name="Hammond M."/>
            <person name="Hannick L.I."/>
            <person name="Hogan J.R."/>
            <person name="Holmes M.H."/>
            <person name="Jaffe D."/>
            <person name="Johnston S.J."/>
            <person name="Kennedy R.C."/>
            <person name="Koo H."/>
            <person name="Kravitz S."/>
            <person name="Kriventseva E.V."/>
            <person name="Kulp D."/>
            <person name="Labutti K."/>
            <person name="Lee E."/>
            <person name="Li S."/>
            <person name="Lovin D.D."/>
            <person name="Mao C."/>
            <person name="Mauceli E."/>
            <person name="Menck C.F."/>
            <person name="Miller J.R."/>
            <person name="Montgomery P."/>
            <person name="Mori A."/>
            <person name="Nascimento A.L."/>
            <person name="Naveira H.F."/>
            <person name="Nusbaum C."/>
            <person name="O'Leary S.B."/>
            <person name="Orvis J."/>
            <person name="Pertea M."/>
            <person name="Quesneville H."/>
            <person name="Reidenbach K.R."/>
            <person name="Rogers Y.-H.C."/>
            <person name="Roth C.W."/>
            <person name="Schneider J.R."/>
            <person name="Schatz M."/>
            <person name="Shumway M."/>
            <person name="Stanke M."/>
            <person name="Stinson E.O."/>
            <person name="Tubio J.M.C."/>
            <person name="Vanzee J.P."/>
            <person name="Verjovski-Almeida S."/>
            <person name="Werner D."/>
            <person name="White O.R."/>
            <person name="Wyder S."/>
            <person name="Zeng Q."/>
            <person name="Zhao Q."/>
            <person name="Zhao Y."/>
            <person name="Hill C.A."/>
            <person name="Raikhel A.S."/>
            <person name="Soares M.B."/>
            <person name="Knudson D.L."/>
            <person name="Lee N.H."/>
            <person name="Galagan J."/>
            <person name="Salzberg S.L."/>
            <person name="Paulsen I.T."/>
            <person name="Dimopoulos G."/>
            <person name="Collins F.H."/>
            <person name="Bruce B."/>
            <person name="Fraser-Liggett C.M."/>
            <person name="Severson D.W."/>
        </authorList>
    </citation>
    <scope>NUCLEOTIDE SEQUENCE [LARGE SCALE GENOMIC DNA]</scope>
    <source>
        <strain>LVPib12</strain>
    </source>
</reference>
<reference key="2">
    <citation type="journal article" date="2007" name="BMC Genomics">
        <title>An annotated catalogue of salivary gland transcripts in the adult female mosquito, Aedes aegypti.</title>
        <authorList>
            <person name="Ribeiro J.M.C."/>
            <person name="Arca B."/>
            <person name="Lombardo F."/>
            <person name="Calvo E."/>
            <person name="Phan V.M."/>
            <person name="Chandra P.K."/>
            <person name="Wikel S.K."/>
        </authorList>
    </citation>
    <scope>NUCLEOTIDE SEQUENCE [LARGE SCALE MRNA] OF 29-336</scope>
    <source>
        <strain>Black-eyed Liverpool</strain>
        <tissue>Salivary gland</tissue>
    </source>
</reference>
<proteinExistence type="evidence at transcript level"/>
<protein>
    <recommendedName>
        <fullName evidence="1">Eukaryotic translation initiation factor 3 subunit H</fullName>
        <shortName evidence="1">eIF3h</shortName>
    </recommendedName>
</protein>
<sequence length="336" mass="38491">MASRAQNRRPAQEVDNTISYVQCDGLAAMKMVKHCHEESRSNMEVAQGALLGLVVDDRLEITNCFPFPKSSDETIDEEEYQLNMMRRLRLVNVDHFHVGWYQSADVGNFLSLPLLESQYHYQTSIEESVVVIYDTQKSARGFLTLKAYRLTPQAIAMYKEEKFTPEALRNLKVGYENLFIEIPIVIKNSALCNIMMSEMKEMVPEEEGTHFLDLGTASVLENHLRCLMDRVDELNQEANKFNKYQQTVIRQEQDKHRMLAKHAQENAARIAKGEAAIPDEEVQKLFRPLPVPSRLNPMIVSGQINTYAQHISQFCSQSLAKLYMTQALQGAKENKQ</sequence>
<keyword id="KW-0963">Cytoplasm</keyword>
<keyword id="KW-0396">Initiation factor</keyword>
<keyword id="KW-0648">Protein biosynthesis</keyword>
<keyword id="KW-1185">Reference proteome</keyword>